<accession>B7HKE5</accession>
<feature type="chain" id="PRO_1000116947" description="Adenosine 5'-phosphosulfate reductase">
    <location>
        <begin position="1"/>
        <end position="234"/>
    </location>
</feature>
<feature type="active site" description="Nucleophile; cysteine thiosulfonate intermediate" evidence="1">
    <location>
        <position position="229"/>
    </location>
</feature>
<feature type="binding site" evidence="1">
    <location>
        <position position="120"/>
    </location>
    <ligand>
        <name>[4Fe-4S] cluster</name>
        <dbReference type="ChEBI" id="CHEBI:49883"/>
    </ligand>
</feature>
<feature type="binding site" evidence="1">
    <location>
        <position position="121"/>
    </location>
    <ligand>
        <name>[4Fe-4S] cluster</name>
        <dbReference type="ChEBI" id="CHEBI:49883"/>
    </ligand>
</feature>
<feature type="binding site" evidence="1">
    <location>
        <position position="203"/>
    </location>
    <ligand>
        <name>[4Fe-4S] cluster</name>
        <dbReference type="ChEBI" id="CHEBI:49883"/>
    </ligand>
</feature>
<feature type="binding site" evidence="1">
    <location>
        <position position="206"/>
    </location>
    <ligand>
        <name>[4Fe-4S] cluster</name>
        <dbReference type="ChEBI" id="CHEBI:49883"/>
    </ligand>
</feature>
<gene>
    <name evidence="1" type="primary">cysH</name>
    <name type="ordered locus">BCAH187_A1582</name>
</gene>
<sequence length="234" mass="27317">MLTYETWEENDVSFSEEDETKGALSVLSWAYKEYENEIVYACSFGVEGMVLLHLINQVNPSAKVVFLDTNVHFQETYELIQKVRERFPSLNIIEKQPKLTLDEQAKLHGNKLWESNPNLCCKIRKILPLEESLANEKAWISGLRREQSETRKHTKFINQDHRFQSIKVCPLIHWTWKEVWRYVYKHSLPYNPLHDIGYPSIGCEKCTLPVGEGGDSRDGRWAGKVKTECGLHYQ</sequence>
<dbReference type="EC" id="1.8.4.10" evidence="1"/>
<dbReference type="EMBL" id="CP001177">
    <property type="protein sequence ID" value="ACJ78335.1"/>
    <property type="molecule type" value="Genomic_DNA"/>
</dbReference>
<dbReference type="SMR" id="B7HKE5"/>
<dbReference type="KEGG" id="bcr:BCAH187_A1582"/>
<dbReference type="HOGENOM" id="CLU_044089_2_1_9"/>
<dbReference type="Proteomes" id="UP000002214">
    <property type="component" value="Chromosome"/>
</dbReference>
<dbReference type="GO" id="GO:0005737">
    <property type="term" value="C:cytoplasm"/>
    <property type="evidence" value="ECO:0007669"/>
    <property type="project" value="UniProtKB-SubCell"/>
</dbReference>
<dbReference type="GO" id="GO:0051539">
    <property type="term" value="F:4 iron, 4 sulfur cluster binding"/>
    <property type="evidence" value="ECO:0007669"/>
    <property type="project" value="UniProtKB-UniRule"/>
</dbReference>
<dbReference type="GO" id="GO:0043866">
    <property type="term" value="F:adenylyl-sulfate reductase (thioredoxin) activity"/>
    <property type="evidence" value="ECO:0007669"/>
    <property type="project" value="UniProtKB-EC"/>
</dbReference>
<dbReference type="GO" id="GO:0046872">
    <property type="term" value="F:metal ion binding"/>
    <property type="evidence" value="ECO:0007669"/>
    <property type="project" value="UniProtKB-KW"/>
</dbReference>
<dbReference type="GO" id="GO:0004604">
    <property type="term" value="F:phosphoadenylyl-sulfate reductase (thioredoxin) activity"/>
    <property type="evidence" value="ECO:0007669"/>
    <property type="project" value="UniProtKB-UniRule"/>
</dbReference>
<dbReference type="GO" id="GO:0019344">
    <property type="term" value="P:cysteine biosynthetic process"/>
    <property type="evidence" value="ECO:0007669"/>
    <property type="project" value="InterPro"/>
</dbReference>
<dbReference type="GO" id="GO:0070814">
    <property type="term" value="P:hydrogen sulfide biosynthetic process"/>
    <property type="evidence" value="ECO:0007669"/>
    <property type="project" value="UniProtKB-UniRule"/>
</dbReference>
<dbReference type="GO" id="GO:0019379">
    <property type="term" value="P:sulfate assimilation, phosphoadenylyl sulfate reduction by phosphoadenylyl-sulfate reductase (thioredoxin)"/>
    <property type="evidence" value="ECO:0007669"/>
    <property type="project" value="UniProtKB-UniRule"/>
</dbReference>
<dbReference type="CDD" id="cd23945">
    <property type="entry name" value="PAPS_reductase"/>
    <property type="match status" value="1"/>
</dbReference>
<dbReference type="FunFam" id="3.40.50.620:FF:000095">
    <property type="entry name" value="Phosphoadenosine phosphosulfate reductase"/>
    <property type="match status" value="1"/>
</dbReference>
<dbReference type="Gene3D" id="3.40.50.620">
    <property type="entry name" value="HUPs"/>
    <property type="match status" value="1"/>
</dbReference>
<dbReference type="HAMAP" id="MF_00063">
    <property type="entry name" value="CysH"/>
    <property type="match status" value="1"/>
</dbReference>
<dbReference type="InterPro" id="IPR011798">
    <property type="entry name" value="APS_reductase"/>
</dbReference>
<dbReference type="InterPro" id="IPR004511">
    <property type="entry name" value="PAPS/APS_Rdtase"/>
</dbReference>
<dbReference type="InterPro" id="IPR002500">
    <property type="entry name" value="PAPS_reduct_dom"/>
</dbReference>
<dbReference type="InterPro" id="IPR014729">
    <property type="entry name" value="Rossmann-like_a/b/a_fold"/>
</dbReference>
<dbReference type="NCBIfam" id="TIGR02055">
    <property type="entry name" value="APS_reductase"/>
    <property type="match status" value="1"/>
</dbReference>
<dbReference type="NCBIfam" id="TIGR00434">
    <property type="entry name" value="cysH"/>
    <property type="match status" value="1"/>
</dbReference>
<dbReference type="NCBIfam" id="NF002537">
    <property type="entry name" value="PRK02090.1"/>
    <property type="match status" value="1"/>
</dbReference>
<dbReference type="PANTHER" id="PTHR46509">
    <property type="entry name" value="PHOSPHOADENOSINE PHOSPHOSULFATE REDUCTASE"/>
    <property type="match status" value="1"/>
</dbReference>
<dbReference type="PANTHER" id="PTHR46509:SF1">
    <property type="entry name" value="PHOSPHOADENOSINE PHOSPHOSULFATE REDUCTASE"/>
    <property type="match status" value="1"/>
</dbReference>
<dbReference type="Pfam" id="PF01507">
    <property type="entry name" value="PAPS_reduct"/>
    <property type="match status" value="1"/>
</dbReference>
<dbReference type="PIRSF" id="PIRSF000857">
    <property type="entry name" value="PAPS_reductase"/>
    <property type="match status" value="1"/>
</dbReference>
<dbReference type="SUPFAM" id="SSF52402">
    <property type="entry name" value="Adenine nucleotide alpha hydrolases-like"/>
    <property type="match status" value="1"/>
</dbReference>
<evidence type="ECO:0000255" key="1">
    <source>
        <dbReference type="HAMAP-Rule" id="MF_00063"/>
    </source>
</evidence>
<organism>
    <name type="scientific">Bacillus cereus (strain AH187)</name>
    <dbReference type="NCBI Taxonomy" id="405534"/>
    <lineage>
        <taxon>Bacteria</taxon>
        <taxon>Bacillati</taxon>
        <taxon>Bacillota</taxon>
        <taxon>Bacilli</taxon>
        <taxon>Bacillales</taxon>
        <taxon>Bacillaceae</taxon>
        <taxon>Bacillus</taxon>
        <taxon>Bacillus cereus group</taxon>
    </lineage>
</organism>
<reference key="1">
    <citation type="submission" date="2008-10" db="EMBL/GenBank/DDBJ databases">
        <title>Genome sequence of Bacillus cereus AH187.</title>
        <authorList>
            <person name="Dodson R.J."/>
            <person name="Durkin A.S."/>
            <person name="Rosovitz M.J."/>
            <person name="Rasko D.A."/>
            <person name="Kolsto A.B."/>
            <person name="Okstad O.A."/>
            <person name="Ravel J."/>
            <person name="Sutton G."/>
        </authorList>
    </citation>
    <scope>NUCLEOTIDE SEQUENCE [LARGE SCALE GENOMIC DNA]</scope>
    <source>
        <strain>AH187</strain>
    </source>
</reference>
<name>CYSH_BACC7</name>
<protein>
    <recommendedName>
        <fullName evidence="1">Adenosine 5'-phosphosulfate reductase</fullName>
        <shortName evidence="1">APS reductase</shortName>
        <ecNumber evidence="1">1.8.4.10</ecNumber>
    </recommendedName>
    <alternativeName>
        <fullName evidence="1">5'-adenylylsulfate reductase</fullName>
    </alternativeName>
    <alternativeName>
        <fullName evidence="1">Thioredoxin-dependent 5'-adenylylsulfate reductase</fullName>
    </alternativeName>
</protein>
<comment type="function">
    <text evidence="1">Catalyzes the formation of sulfite from adenosine 5'-phosphosulfate (APS) using thioredoxin as an electron donor.</text>
</comment>
<comment type="catalytic activity">
    <reaction evidence="1">
        <text>[thioredoxin]-disulfide + sulfite + AMP + 2 H(+) = adenosine 5'-phosphosulfate + [thioredoxin]-dithiol</text>
        <dbReference type="Rhea" id="RHEA:21976"/>
        <dbReference type="Rhea" id="RHEA-COMP:10698"/>
        <dbReference type="Rhea" id="RHEA-COMP:10700"/>
        <dbReference type="ChEBI" id="CHEBI:15378"/>
        <dbReference type="ChEBI" id="CHEBI:17359"/>
        <dbReference type="ChEBI" id="CHEBI:29950"/>
        <dbReference type="ChEBI" id="CHEBI:50058"/>
        <dbReference type="ChEBI" id="CHEBI:58243"/>
        <dbReference type="ChEBI" id="CHEBI:456215"/>
        <dbReference type="EC" id="1.8.4.10"/>
    </reaction>
</comment>
<comment type="cofactor">
    <cofactor evidence="1">
        <name>[4Fe-4S] cluster</name>
        <dbReference type="ChEBI" id="CHEBI:49883"/>
    </cofactor>
    <text evidence="1">Binds 1 [4Fe-4S] cluster per subunit.</text>
</comment>
<comment type="pathway">
    <text evidence="1">Sulfur metabolism; hydrogen sulfide biosynthesis; sulfite from sulfate.</text>
</comment>
<comment type="subcellular location">
    <subcellularLocation>
        <location evidence="1">Cytoplasm</location>
    </subcellularLocation>
</comment>
<comment type="similarity">
    <text evidence="1">Belongs to the PAPS reductase family. CysH subfamily.</text>
</comment>
<proteinExistence type="inferred from homology"/>
<keyword id="KW-0963">Cytoplasm</keyword>
<keyword id="KW-0408">Iron</keyword>
<keyword id="KW-0411">Iron-sulfur</keyword>
<keyword id="KW-0479">Metal-binding</keyword>
<keyword id="KW-0560">Oxidoreductase</keyword>